<gene>
    <name evidence="8" type="primary">ECP31</name>
    <name evidence="10" type="ordered locus">At3g22500</name>
    <name evidence="11" type="ORF">F16J14.6</name>
</gene>
<comment type="function">
    <text evidence="9">LEA proteins are late embryonic proteins abundant in higher plant seed embryos. The function of those proteins is not known.</text>
</comment>
<comment type="subcellular location">
    <subcellularLocation>
        <location evidence="5">Cytoplasm</location>
    </subcellularLocation>
    <subcellularLocation>
        <location evidence="5">Nucleus</location>
    </subcellularLocation>
</comment>
<comment type="tissue specificity">
    <text evidence="4 6">Embryo specific, only in dry mature seeds. Expressed at low levels.</text>
</comment>
<comment type="developmental stage">
    <text evidence="4">In mature embryos, restricted to provascular tissues. Also present in the seed coat outer tegument and silique epidermis. Levels decrease during seed imbibition and germination.</text>
</comment>
<comment type="similarity">
    <text evidence="9">Belongs to the LEA type SMP family.</text>
</comment>
<sequence>MSQEQPRRPREPVKYGDVFEVSGELADKPIAPEDAKMMQSAETHVFGHTQKGGPAAVMQSAATTNIRGGFVHPDDKTELVAERGATVEQTVPAATVTTEFVGGQVVGQHVEPRRVVAAARTDEEALQSTITIGEALEATVKTAGNKPVDQSDAAAIQAAEMRASGTNVIALAGVAASAQSAADHNATVDRDERKIKLRDVLTGAAGKLSADRAVTREDAEGVVSAEMRNNPKLCTHPGGVAASLTVAARLNERVDI</sequence>
<reference key="1">
    <citation type="journal article" date="1996" name="Physiol. Plantarum">
        <title>Late embryogenesis abundant protein in Arabidopsis thaliana homologous to carrot ECP31.</title>
        <authorList>
            <person name="Yang H."/>
            <person name="Saitou T."/>
            <person name="Komeda Y."/>
            <person name="Harada H."/>
            <person name="Kamada H."/>
        </authorList>
    </citation>
    <scope>NUCLEOTIDE SEQUENCE [MRNA]</scope>
    <scope>TISSUE SPECIFICITY</scope>
    <source>
        <strain>cv. Columbia</strain>
        <tissue>Dry seed</tissue>
    </source>
</reference>
<reference key="2">
    <citation type="journal article" date="2000" name="DNA Res.">
        <title>Structural analysis of Arabidopsis thaliana chromosome 3. II. Sequence features of the 4,251,695 bp regions covered by 90 P1, TAC and BAC clones.</title>
        <authorList>
            <person name="Kaneko T."/>
            <person name="Katoh T."/>
            <person name="Sato S."/>
            <person name="Nakamura Y."/>
            <person name="Asamizu E."/>
            <person name="Tabata S."/>
        </authorList>
    </citation>
    <scope>NUCLEOTIDE SEQUENCE [LARGE SCALE GENOMIC DNA]</scope>
    <source>
        <strain>cv. Columbia</strain>
    </source>
</reference>
<reference key="3">
    <citation type="journal article" date="2017" name="Plant J.">
        <title>Araport11: a complete reannotation of the Arabidopsis thaliana reference genome.</title>
        <authorList>
            <person name="Cheng C.Y."/>
            <person name="Krishnakumar V."/>
            <person name="Chan A.P."/>
            <person name="Thibaud-Nissen F."/>
            <person name="Schobel S."/>
            <person name="Town C.D."/>
        </authorList>
    </citation>
    <scope>GENOME REANNOTATION</scope>
    <source>
        <strain>cv. Columbia</strain>
    </source>
</reference>
<reference key="4">
    <citation type="journal article" date="2003" name="Science">
        <title>Empirical analysis of transcriptional activity in the Arabidopsis genome.</title>
        <authorList>
            <person name="Yamada K."/>
            <person name="Lim J."/>
            <person name="Dale J.M."/>
            <person name="Chen H."/>
            <person name="Shinn P."/>
            <person name="Palm C.J."/>
            <person name="Southwick A.M."/>
            <person name="Wu H.C."/>
            <person name="Kim C.J."/>
            <person name="Nguyen M."/>
            <person name="Pham P.K."/>
            <person name="Cheuk R.F."/>
            <person name="Karlin-Newmann G."/>
            <person name="Liu S.X."/>
            <person name="Lam B."/>
            <person name="Sakano H."/>
            <person name="Wu T."/>
            <person name="Yu G."/>
            <person name="Miranda M."/>
            <person name="Quach H.L."/>
            <person name="Tripp M."/>
            <person name="Chang C.H."/>
            <person name="Lee J.M."/>
            <person name="Toriumi M.J."/>
            <person name="Chan M.M."/>
            <person name="Tang C.C."/>
            <person name="Onodera C.S."/>
            <person name="Deng J.M."/>
            <person name="Akiyama K."/>
            <person name="Ansari Y."/>
            <person name="Arakawa T."/>
            <person name="Banh J."/>
            <person name="Banno F."/>
            <person name="Bowser L."/>
            <person name="Brooks S.Y."/>
            <person name="Carninci P."/>
            <person name="Chao Q."/>
            <person name="Choy N."/>
            <person name="Enju A."/>
            <person name="Goldsmith A.D."/>
            <person name="Gurjal M."/>
            <person name="Hansen N.F."/>
            <person name="Hayashizaki Y."/>
            <person name="Johnson-Hopson C."/>
            <person name="Hsuan V.W."/>
            <person name="Iida K."/>
            <person name="Karnes M."/>
            <person name="Khan S."/>
            <person name="Koesema E."/>
            <person name="Ishida J."/>
            <person name="Jiang P.X."/>
            <person name="Jones T."/>
            <person name="Kawai J."/>
            <person name="Kamiya A."/>
            <person name="Meyers C."/>
            <person name="Nakajima M."/>
            <person name="Narusaka M."/>
            <person name="Seki M."/>
            <person name="Sakurai T."/>
            <person name="Satou M."/>
            <person name="Tamse R."/>
            <person name="Vaysberg M."/>
            <person name="Wallender E.K."/>
            <person name="Wong C."/>
            <person name="Yamamura Y."/>
            <person name="Yuan S."/>
            <person name="Shinozaki K."/>
            <person name="Davis R.W."/>
            <person name="Theologis A."/>
            <person name="Ecker J.R."/>
        </authorList>
    </citation>
    <scope>NUCLEOTIDE SEQUENCE [LARGE SCALE MRNA]</scope>
    <source>
        <strain>cv. Columbia</strain>
    </source>
</reference>
<reference key="5">
    <citation type="journal article" date="1999" name="Plant Mol. Biol.">
        <title>Expression and cellular localization of Atrab28 during arabidopsis embryogenesis.</title>
        <authorList>
            <person name="Arenas-Mena C."/>
            <person name="Raynal M."/>
            <person name="Borrell A."/>
            <person name="Varoquaux F."/>
            <person name="Cutanda M.C."/>
            <person name="Stacy R.A.P."/>
            <person name="Pages M."/>
            <person name="Delseny M."/>
            <person name="Culianez-Macia F.A."/>
        </authorList>
    </citation>
    <scope>TISSUE SPECIFICITY</scope>
    <scope>DEVELOPMENTAL STAGE</scope>
    <source>
        <strain>cv. Columbia</strain>
    </source>
</reference>
<reference key="6">
    <citation type="journal article" date="2008" name="BMC Genomics">
        <title>LEA (late embryogenesis abundant) proteins and their encoding genes in Arabidopsis thaliana.</title>
        <authorList>
            <person name="Hundertmark M."/>
            <person name="Hincha D.K."/>
        </authorList>
    </citation>
    <scope>GENE FAMILY</scope>
    <scope>NOMENCLATURE</scope>
</reference>
<reference key="7">
    <citation type="journal article" date="2014" name="Plant Cell">
        <title>The ubiquitous distribution of late embryogenesis abundant proteins across cell compartments in Arabidopsis offers tailored protection against abiotic stress.</title>
        <authorList>
            <person name="Candat A."/>
            <person name="Paszkiewicz G."/>
            <person name="Neveu M."/>
            <person name="Gautier R."/>
            <person name="Logan D.C."/>
            <person name="Avelange-Macherel M.-H."/>
            <person name="Macherel D."/>
        </authorList>
    </citation>
    <scope>SUBCELLULAR LOCATION</scope>
    <scope>GENE FAMILY</scope>
    <scope>NOMENCLATURE</scope>
</reference>
<accession>Q9LJ95</accession>
<accession>Q96245</accession>
<dbReference type="EMBL" id="D64139">
    <property type="protein sequence ID" value="BAA11016.1"/>
    <property type="molecule type" value="mRNA"/>
</dbReference>
<dbReference type="EMBL" id="AP000731">
    <property type="protein sequence ID" value="BAB01466.1"/>
    <property type="molecule type" value="Genomic_DNA"/>
</dbReference>
<dbReference type="EMBL" id="CP002686">
    <property type="protein sequence ID" value="AEE76647.1"/>
    <property type="molecule type" value="Genomic_DNA"/>
</dbReference>
<dbReference type="EMBL" id="AY052316">
    <property type="protein sequence ID" value="AAK96509.1"/>
    <property type="molecule type" value="mRNA"/>
</dbReference>
<dbReference type="EMBL" id="BT000845">
    <property type="protein sequence ID" value="AAN38682.1"/>
    <property type="molecule type" value="mRNA"/>
</dbReference>
<dbReference type="FunCoup" id="Q9LJ95">
    <property type="interactions" value="97"/>
</dbReference>
<dbReference type="STRING" id="3702.Q9LJ95"/>
<dbReference type="PaxDb" id="3702-AT3G22500.1"/>
<dbReference type="ProMEX" id="Q9LJ95"/>
<dbReference type="ProteomicsDB" id="230198"/>
<dbReference type="EnsemblPlants" id="AT3G22500.1">
    <property type="protein sequence ID" value="AT3G22500.1"/>
    <property type="gene ID" value="AT3G22500"/>
</dbReference>
<dbReference type="Gramene" id="AT3G22500.1">
    <property type="protein sequence ID" value="AT3G22500.1"/>
    <property type="gene ID" value="AT3G22500"/>
</dbReference>
<dbReference type="KEGG" id="ath:AT3G22500"/>
<dbReference type="Araport" id="AT3G22500"/>
<dbReference type="TAIR" id="AT3G22500">
    <property type="gene designation" value="ATECP31"/>
</dbReference>
<dbReference type="eggNOG" id="ENOG502QPSX">
    <property type="taxonomic scope" value="Eukaryota"/>
</dbReference>
<dbReference type="HOGENOM" id="CLU_075678_0_0_1"/>
<dbReference type="InParanoid" id="Q9LJ95"/>
<dbReference type="OMA" id="CAATRNA"/>
<dbReference type="PhylomeDB" id="Q9LJ95"/>
<dbReference type="PRO" id="PR:Q9LJ95"/>
<dbReference type="Proteomes" id="UP000006548">
    <property type="component" value="Chromosome 3"/>
</dbReference>
<dbReference type="ExpressionAtlas" id="Q9LJ95">
    <property type="expression patterns" value="baseline and differential"/>
</dbReference>
<dbReference type="GO" id="GO:0005829">
    <property type="term" value="C:cytosol"/>
    <property type="evidence" value="ECO:0007005"/>
    <property type="project" value="TAIR"/>
</dbReference>
<dbReference type="GO" id="GO:0005634">
    <property type="term" value="C:nucleus"/>
    <property type="evidence" value="ECO:0000314"/>
    <property type="project" value="UniProtKB"/>
</dbReference>
<dbReference type="InterPro" id="IPR042971">
    <property type="entry name" value="LEA_SMP"/>
</dbReference>
<dbReference type="InterPro" id="IPR007011">
    <property type="entry name" value="LEA_SMP_dom"/>
</dbReference>
<dbReference type="PANTHER" id="PTHR31174:SF7">
    <property type="entry name" value="LATE EMBRYOGENESIS ABUNDANT PROTEIN 31-RELATED"/>
    <property type="match status" value="1"/>
</dbReference>
<dbReference type="PANTHER" id="PTHR31174">
    <property type="entry name" value="SEED MATURATION FAMILY PROTEIN"/>
    <property type="match status" value="1"/>
</dbReference>
<dbReference type="Pfam" id="PF04927">
    <property type="entry name" value="SMP"/>
    <property type="match status" value="3"/>
</dbReference>
<evidence type="ECO:0000250" key="1">
    <source>
        <dbReference type="UniProtKB" id="Q9LJ97"/>
    </source>
</evidence>
<evidence type="ECO:0000255" key="2"/>
<evidence type="ECO:0000256" key="3">
    <source>
        <dbReference type="SAM" id="MobiDB-lite"/>
    </source>
</evidence>
<evidence type="ECO:0000269" key="4">
    <source>
    </source>
</evidence>
<evidence type="ECO:0000269" key="5">
    <source>
    </source>
</evidence>
<evidence type="ECO:0000269" key="6">
    <source ref="1"/>
</evidence>
<evidence type="ECO:0000303" key="7">
    <source>
    </source>
</evidence>
<evidence type="ECO:0000303" key="8">
    <source ref="1"/>
</evidence>
<evidence type="ECO:0000305" key="9"/>
<evidence type="ECO:0000312" key="10">
    <source>
        <dbReference type="Araport" id="AT3G22500"/>
    </source>
</evidence>
<evidence type="ECO:0000312" key="11">
    <source>
        <dbReference type="EMBL" id="BAB01466.1"/>
    </source>
</evidence>
<organism evidence="11">
    <name type="scientific">Arabidopsis thaliana</name>
    <name type="common">Mouse-ear cress</name>
    <dbReference type="NCBI Taxonomy" id="3702"/>
    <lineage>
        <taxon>Eukaryota</taxon>
        <taxon>Viridiplantae</taxon>
        <taxon>Streptophyta</taxon>
        <taxon>Embryophyta</taxon>
        <taxon>Tracheophyta</taxon>
        <taxon>Spermatophyta</taxon>
        <taxon>Magnoliopsida</taxon>
        <taxon>eudicotyledons</taxon>
        <taxon>Gunneridae</taxon>
        <taxon>Pentapetalae</taxon>
        <taxon>rosids</taxon>
        <taxon>malvids</taxon>
        <taxon>Brassicales</taxon>
        <taxon>Brassicaceae</taxon>
        <taxon>Camelineae</taxon>
        <taxon>Arabidopsis</taxon>
    </lineage>
</organism>
<proteinExistence type="evidence at transcript level"/>
<name>LEA32_ARATH</name>
<keyword id="KW-0963">Cytoplasm</keyword>
<keyword id="KW-0539">Nucleus</keyword>
<keyword id="KW-1185">Reference proteome</keyword>
<keyword id="KW-0677">Repeat</keyword>
<protein>
    <recommendedName>
        <fullName evidence="7">Late embryogenesis abundant protein 32</fullName>
        <shortName evidence="7">LEA 32</shortName>
    </recommendedName>
    <alternativeName>
        <fullName evidence="8">Embryogenic cell protein 31</fullName>
        <shortName evidence="8">AtECP31</shortName>
    </alternativeName>
</protein>
<feature type="chain" id="PRO_0000436060" description="Late embryogenesis abundant protein 32">
    <location>
        <begin position="1"/>
        <end position="256"/>
    </location>
</feature>
<feature type="domain" description="SMP 1" evidence="2">
    <location>
        <begin position="13"/>
        <end position="66"/>
    </location>
</feature>
<feature type="domain" description="SMP 2" evidence="2">
    <location>
        <begin position="130"/>
        <end position="187"/>
    </location>
</feature>
<feature type="domain" description="SMP 3" evidence="2">
    <location>
        <begin position="195"/>
        <end position="253"/>
    </location>
</feature>
<feature type="region of interest" description="Disordered" evidence="3">
    <location>
        <begin position="1"/>
        <end position="20"/>
    </location>
</feature>
<feature type="short sequence motif" description="Nuclear localization signal (NLS)" evidence="1">
    <location>
        <begin position="5"/>
        <end position="9"/>
    </location>
</feature>
<feature type="compositionally biased region" description="Basic and acidic residues" evidence="3">
    <location>
        <begin position="1"/>
        <end position="14"/>
    </location>
</feature>
<feature type="sequence conflict" description="In Ref. 1; BAA11016." evidence="9" ref="1">
    <original>D</original>
    <variation>N</variation>
    <location>
        <position position="191"/>
    </location>
</feature>
<feature type="sequence conflict" description="In Ref. 1; BAA11016." evidence="9" ref="1">
    <original>V</original>
    <variation>F</variation>
    <location>
        <position position="254"/>
    </location>
</feature>